<name>RUVA_NITEU</name>
<organism>
    <name type="scientific">Nitrosomonas europaea (strain ATCC 19718 / CIP 103999 / KCTC 2705 / NBRC 14298)</name>
    <dbReference type="NCBI Taxonomy" id="228410"/>
    <lineage>
        <taxon>Bacteria</taxon>
        <taxon>Pseudomonadati</taxon>
        <taxon>Pseudomonadota</taxon>
        <taxon>Betaproteobacteria</taxon>
        <taxon>Nitrosomonadales</taxon>
        <taxon>Nitrosomonadaceae</taxon>
        <taxon>Nitrosomonas</taxon>
    </lineage>
</organism>
<accession>Q820S3</accession>
<evidence type="ECO:0000255" key="1">
    <source>
        <dbReference type="HAMAP-Rule" id="MF_00031"/>
    </source>
</evidence>
<keyword id="KW-0963">Cytoplasm</keyword>
<keyword id="KW-0227">DNA damage</keyword>
<keyword id="KW-0233">DNA recombination</keyword>
<keyword id="KW-0234">DNA repair</keyword>
<keyword id="KW-0238">DNA-binding</keyword>
<keyword id="KW-1185">Reference proteome</keyword>
<gene>
    <name evidence="1" type="primary">ruvA</name>
    <name type="ordered locus">NE0212</name>
</gene>
<reference key="1">
    <citation type="journal article" date="2003" name="J. Bacteriol.">
        <title>Complete genome sequence of the ammonia-oxidizing bacterium and obligate chemolithoautotroph Nitrosomonas europaea.</title>
        <authorList>
            <person name="Chain P."/>
            <person name="Lamerdin J.E."/>
            <person name="Larimer F.W."/>
            <person name="Regala W."/>
            <person name="Lao V."/>
            <person name="Land M.L."/>
            <person name="Hauser L."/>
            <person name="Hooper A.B."/>
            <person name="Klotz M.G."/>
            <person name="Norton J."/>
            <person name="Sayavedra-Soto L.A."/>
            <person name="Arciero D.M."/>
            <person name="Hommes N.G."/>
            <person name="Whittaker M.M."/>
            <person name="Arp D.J."/>
        </authorList>
    </citation>
    <scope>NUCLEOTIDE SEQUENCE [LARGE SCALE GENOMIC DNA]</scope>
    <source>
        <strain>ATCC 19718 / CIP 103999 / KCTC 2705 / NBRC 14298</strain>
    </source>
</reference>
<comment type="function">
    <text evidence="1">The RuvA-RuvB-RuvC complex processes Holliday junction (HJ) DNA during genetic recombination and DNA repair, while the RuvA-RuvB complex plays an important role in the rescue of blocked DNA replication forks via replication fork reversal (RFR). RuvA specifically binds to HJ cruciform DNA, conferring on it an open structure. The RuvB hexamer acts as an ATP-dependent pump, pulling dsDNA into and through the RuvAB complex. HJ branch migration allows RuvC to scan DNA until it finds its consensus sequence, where it cleaves and resolves the cruciform DNA.</text>
</comment>
<comment type="subunit">
    <text evidence="1">Homotetramer. Forms an RuvA(8)-RuvB(12)-Holliday junction (HJ) complex. HJ DNA is sandwiched between 2 RuvA tetramers; dsDNA enters through RuvA and exits via RuvB. An RuvB hexamer assembles on each DNA strand where it exits the tetramer. Each RuvB hexamer is contacted by two RuvA subunits (via domain III) on 2 adjacent RuvB subunits; this complex drives branch migration. In the full resolvosome a probable DNA-RuvA(4)-RuvB(12)-RuvC(2) complex forms which resolves the HJ.</text>
</comment>
<comment type="subcellular location">
    <subcellularLocation>
        <location evidence="1">Cytoplasm</location>
    </subcellularLocation>
</comment>
<comment type="domain">
    <text evidence="1">Has three domains with a flexible linker between the domains II and III and assumes an 'L' shape. Domain III is highly mobile and contacts RuvB.</text>
</comment>
<comment type="similarity">
    <text evidence="1">Belongs to the RuvA family.</text>
</comment>
<sequence length="195" mass="21225">MIGRIAGLLLEKHPPLVLVDVNGIGYEIDVPMSTFCRLPGIGEQVTLHTHFWVREDAHLLFGFMTEPERVLFRQLTKISGIGARTGLAILSGLSVNDLHQIVVSQDSTRLTRIPGIGKKTAERLLLELRDKISPAITLPETGTAMASSTDKDILNALSALGYNDREANWAVGQLSEGVTVSDGIMQSLRLLSKAK</sequence>
<protein>
    <recommendedName>
        <fullName evidence="1">Holliday junction branch migration complex subunit RuvA</fullName>
    </recommendedName>
</protein>
<feature type="chain" id="PRO_0000094657" description="Holliday junction branch migration complex subunit RuvA">
    <location>
        <begin position="1"/>
        <end position="195"/>
    </location>
</feature>
<feature type="region of interest" description="Domain I" evidence="1">
    <location>
        <begin position="1"/>
        <end position="64"/>
    </location>
</feature>
<feature type="region of interest" description="Domain II" evidence="1">
    <location>
        <begin position="65"/>
        <end position="140"/>
    </location>
</feature>
<feature type="region of interest" description="Flexible linker" evidence="1">
    <location>
        <begin position="140"/>
        <end position="144"/>
    </location>
</feature>
<feature type="region of interest" description="Domain III" evidence="1">
    <location>
        <begin position="145"/>
        <end position="195"/>
    </location>
</feature>
<dbReference type="EMBL" id="AL954747">
    <property type="protein sequence ID" value="CAD84123.1"/>
    <property type="molecule type" value="Genomic_DNA"/>
</dbReference>
<dbReference type="RefSeq" id="WP_011110857.1">
    <property type="nucleotide sequence ID" value="NC_004757.1"/>
</dbReference>
<dbReference type="SMR" id="Q820S3"/>
<dbReference type="STRING" id="228410.NE0212"/>
<dbReference type="GeneID" id="87103419"/>
<dbReference type="KEGG" id="neu:NE0212"/>
<dbReference type="eggNOG" id="COG0632">
    <property type="taxonomic scope" value="Bacteria"/>
</dbReference>
<dbReference type="HOGENOM" id="CLU_087936_0_0_4"/>
<dbReference type="OrthoDB" id="5293449at2"/>
<dbReference type="PhylomeDB" id="Q820S3"/>
<dbReference type="Proteomes" id="UP000001416">
    <property type="component" value="Chromosome"/>
</dbReference>
<dbReference type="GO" id="GO:0005737">
    <property type="term" value="C:cytoplasm"/>
    <property type="evidence" value="ECO:0007669"/>
    <property type="project" value="UniProtKB-SubCell"/>
</dbReference>
<dbReference type="GO" id="GO:0009379">
    <property type="term" value="C:Holliday junction helicase complex"/>
    <property type="evidence" value="ECO:0007669"/>
    <property type="project" value="InterPro"/>
</dbReference>
<dbReference type="GO" id="GO:0048476">
    <property type="term" value="C:Holliday junction resolvase complex"/>
    <property type="evidence" value="ECO:0007669"/>
    <property type="project" value="UniProtKB-UniRule"/>
</dbReference>
<dbReference type="GO" id="GO:0005524">
    <property type="term" value="F:ATP binding"/>
    <property type="evidence" value="ECO:0007669"/>
    <property type="project" value="InterPro"/>
</dbReference>
<dbReference type="GO" id="GO:0000400">
    <property type="term" value="F:four-way junction DNA binding"/>
    <property type="evidence" value="ECO:0007669"/>
    <property type="project" value="UniProtKB-UniRule"/>
</dbReference>
<dbReference type="GO" id="GO:0009378">
    <property type="term" value="F:four-way junction helicase activity"/>
    <property type="evidence" value="ECO:0007669"/>
    <property type="project" value="InterPro"/>
</dbReference>
<dbReference type="GO" id="GO:0006310">
    <property type="term" value="P:DNA recombination"/>
    <property type="evidence" value="ECO:0007669"/>
    <property type="project" value="UniProtKB-UniRule"/>
</dbReference>
<dbReference type="GO" id="GO:0006281">
    <property type="term" value="P:DNA repair"/>
    <property type="evidence" value="ECO:0007669"/>
    <property type="project" value="UniProtKB-UniRule"/>
</dbReference>
<dbReference type="CDD" id="cd14332">
    <property type="entry name" value="UBA_RuvA_C"/>
    <property type="match status" value="1"/>
</dbReference>
<dbReference type="Gene3D" id="1.10.150.20">
    <property type="entry name" value="5' to 3' exonuclease, C-terminal subdomain"/>
    <property type="match status" value="1"/>
</dbReference>
<dbReference type="Gene3D" id="2.40.50.140">
    <property type="entry name" value="Nucleic acid-binding proteins"/>
    <property type="match status" value="1"/>
</dbReference>
<dbReference type="HAMAP" id="MF_00031">
    <property type="entry name" value="DNA_HJ_migration_RuvA"/>
    <property type="match status" value="1"/>
</dbReference>
<dbReference type="InterPro" id="IPR013849">
    <property type="entry name" value="DNA_helicase_Holl-junc_RuvA_I"/>
</dbReference>
<dbReference type="InterPro" id="IPR003583">
    <property type="entry name" value="Hlx-hairpin-Hlx_DNA-bd_motif"/>
</dbReference>
<dbReference type="InterPro" id="IPR012340">
    <property type="entry name" value="NA-bd_OB-fold"/>
</dbReference>
<dbReference type="InterPro" id="IPR000085">
    <property type="entry name" value="RuvA"/>
</dbReference>
<dbReference type="InterPro" id="IPR010994">
    <property type="entry name" value="RuvA_2-like"/>
</dbReference>
<dbReference type="InterPro" id="IPR011114">
    <property type="entry name" value="RuvA_C"/>
</dbReference>
<dbReference type="InterPro" id="IPR036267">
    <property type="entry name" value="RuvA_C_sf"/>
</dbReference>
<dbReference type="NCBIfam" id="TIGR00084">
    <property type="entry name" value="ruvA"/>
    <property type="match status" value="1"/>
</dbReference>
<dbReference type="Pfam" id="PF14520">
    <property type="entry name" value="HHH_5"/>
    <property type="match status" value="1"/>
</dbReference>
<dbReference type="Pfam" id="PF07499">
    <property type="entry name" value="RuvA_C"/>
    <property type="match status" value="1"/>
</dbReference>
<dbReference type="Pfam" id="PF01330">
    <property type="entry name" value="RuvA_N"/>
    <property type="match status" value="1"/>
</dbReference>
<dbReference type="SMART" id="SM00278">
    <property type="entry name" value="HhH1"/>
    <property type="match status" value="2"/>
</dbReference>
<dbReference type="SUPFAM" id="SSF46929">
    <property type="entry name" value="DNA helicase RuvA subunit, C-terminal domain"/>
    <property type="match status" value="1"/>
</dbReference>
<dbReference type="SUPFAM" id="SSF50249">
    <property type="entry name" value="Nucleic acid-binding proteins"/>
    <property type="match status" value="1"/>
</dbReference>
<dbReference type="SUPFAM" id="SSF47781">
    <property type="entry name" value="RuvA domain 2-like"/>
    <property type="match status" value="1"/>
</dbReference>
<proteinExistence type="inferred from homology"/>